<comment type="function">
    <text evidence="1">The proteasome degrades poly-ubiquitinated proteins in the cytoplasm and in the nucleus. It is essential for the regulated turnover of proteins and for the removal of misfolded proteins. The proteasome is a multicatalytic proteinase complex that is characterized by its ability to cleave peptides with Arg, Phe, Tyr, Leu, and Glu adjacent to the leaving group at neutral or slightly basic pH. It has an ATP-dependent proteolytic activity (By similarity).</text>
</comment>
<comment type="catalytic activity">
    <reaction>
        <text>Cleavage of peptide bonds with very broad specificity.</text>
        <dbReference type="EC" id="3.4.25.1"/>
    </reaction>
</comment>
<comment type="subunit">
    <text evidence="1">The 26S proteasome consists of a 20S proteasome core and two 19S regulatory subunits. The 20S proteasome core is composed of 28 subunits that are arranged in four stacked rings, resulting in a barrel-shaped structure. The two end rings are each formed by seven alpha subunits, and the two central rings are each formed by seven beta subunits. The catalytic chamber with the active sites is on the inside of the barrel (By similarity).</text>
</comment>
<comment type="subcellular location">
    <subcellularLocation>
        <location evidence="2">Cytoplasm</location>
    </subcellularLocation>
    <subcellularLocation>
        <location evidence="1">Nucleus</location>
    </subcellularLocation>
</comment>
<comment type="developmental stage">
    <text evidence="3">Expressed in late sporogonial stages.</text>
</comment>
<comment type="similarity">
    <text evidence="2">Belongs to the peptidase T1B family.</text>
</comment>
<proteinExistence type="evidence at protein level"/>
<keyword id="KW-0963">Cytoplasm</keyword>
<keyword id="KW-0378">Hydrolase</keyword>
<keyword id="KW-0539">Nucleus</keyword>
<keyword id="KW-0645">Protease</keyword>
<keyword id="KW-0647">Proteasome</keyword>
<keyword id="KW-1185">Reference proteome</keyword>
<keyword id="KW-0888">Threonine protease</keyword>
<accession>Q8SR11</accession>
<feature type="propeptide" id="PRO_0000391408" description="Removed in mature form" evidence="1">
    <location>
        <begin position="1"/>
        <end position="10"/>
    </location>
</feature>
<feature type="chain" id="PRO_0000382760" description="Probable proteasome subunit beta type-1">
    <location>
        <begin position="11"/>
        <end position="203"/>
    </location>
</feature>
<feature type="active site" description="Nucleophile" evidence="1">
    <location>
        <position position="11"/>
    </location>
</feature>
<protein>
    <recommendedName>
        <fullName>Probable proteasome subunit beta type-1</fullName>
        <ecNumber>3.4.25.1</ecNumber>
    </recommendedName>
    <alternativeName>
        <fullName>26S proteasome beta-type subunit PRE3</fullName>
    </alternativeName>
    <alternativeName>
        <fullName>Multicatalytic endopeptidase complex subunit PRE3</fullName>
    </alternativeName>
</protein>
<organism>
    <name type="scientific">Encephalitozoon cuniculi (strain GB-M1)</name>
    <name type="common">Microsporidian parasite</name>
    <dbReference type="NCBI Taxonomy" id="284813"/>
    <lineage>
        <taxon>Eukaryota</taxon>
        <taxon>Fungi</taxon>
        <taxon>Fungi incertae sedis</taxon>
        <taxon>Microsporidia</taxon>
        <taxon>Unikaryonidae</taxon>
        <taxon>Encephalitozoon</taxon>
    </lineage>
</organism>
<reference key="1">
    <citation type="journal article" date="2001" name="Nature">
        <title>Genome sequence and gene compaction of the eukaryote parasite Encephalitozoon cuniculi.</title>
        <authorList>
            <person name="Katinka M.D."/>
            <person name="Duprat S."/>
            <person name="Cornillot E."/>
            <person name="Metenier G."/>
            <person name="Thomarat F."/>
            <person name="Prensier G."/>
            <person name="Barbe V."/>
            <person name="Peyretaillade E."/>
            <person name="Brottier P."/>
            <person name="Wincker P."/>
            <person name="Delbac F."/>
            <person name="El Alaoui H."/>
            <person name="Peyret P."/>
            <person name="Saurin W."/>
            <person name="Gouy M."/>
            <person name="Weissenbach J."/>
            <person name="Vivares C.P."/>
        </authorList>
    </citation>
    <scope>NUCLEOTIDE SEQUENCE [LARGE SCALE GENOMIC DNA]</scope>
    <source>
        <strain>GB-M1</strain>
    </source>
</reference>
<reference key="2">
    <citation type="journal article" date="2006" name="Proteomics">
        <title>Proteomic analysis of the eukaryotic parasite Encephalitozoon cuniculi (microsporidia): a reference map for proteins expressed in late sporogonial stages.</title>
        <authorList>
            <person name="Brosson D."/>
            <person name="Kuhn L."/>
            <person name="Delbac F."/>
            <person name="Garin J."/>
            <person name="Vivares C.P."/>
            <person name="Texier C."/>
        </authorList>
    </citation>
    <scope>IDENTIFICATION BY MASS SPECTROMETRY [LARGE SCALE ANALYSIS]</scope>
    <scope>DEVELOPMENTAL STAGE</scope>
</reference>
<name>PSB1_ENCCU</name>
<gene>
    <name type="primary">PRE3</name>
    <name type="ordered locus">ECU10_1450</name>
</gene>
<dbReference type="EC" id="3.4.25.1"/>
<dbReference type="EMBL" id="AL590449">
    <property type="protein sequence ID" value="CAD25864.1"/>
    <property type="molecule type" value="Genomic_DNA"/>
</dbReference>
<dbReference type="RefSeq" id="NP_586260.1">
    <property type="nucleotide sequence ID" value="NM_001042093.1"/>
</dbReference>
<dbReference type="SMR" id="Q8SR11"/>
<dbReference type="FunCoup" id="Q8SR11">
    <property type="interactions" value="211"/>
</dbReference>
<dbReference type="STRING" id="284813.Q8SR11"/>
<dbReference type="MEROPS" id="T01.010"/>
<dbReference type="GeneID" id="859910"/>
<dbReference type="KEGG" id="ecu:ECU10_1450"/>
<dbReference type="VEuPathDB" id="MicrosporidiaDB:ECU10_1450"/>
<dbReference type="HOGENOM" id="CLU_035750_5_2_1"/>
<dbReference type="InParanoid" id="Q8SR11"/>
<dbReference type="OMA" id="TFIYGYC"/>
<dbReference type="OrthoDB" id="7854943at2759"/>
<dbReference type="Proteomes" id="UP000000819">
    <property type="component" value="Chromosome X"/>
</dbReference>
<dbReference type="GO" id="GO:0005737">
    <property type="term" value="C:cytoplasm"/>
    <property type="evidence" value="ECO:0007669"/>
    <property type="project" value="UniProtKB-SubCell"/>
</dbReference>
<dbReference type="GO" id="GO:0005634">
    <property type="term" value="C:nucleus"/>
    <property type="evidence" value="ECO:0007669"/>
    <property type="project" value="UniProtKB-SubCell"/>
</dbReference>
<dbReference type="GO" id="GO:0019774">
    <property type="term" value="C:proteasome core complex, beta-subunit complex"/>
    <property type="evidence" value="ECO:0000250"/>
    <property type="project" value="UniProtKB"/>
</dbReference>
<dbReference type="GO" id="GO:0004298">
    <property type="term" value="F:threonine-type endopeptidase activity"/>
    <property type="evidence" value="ECO:0007669"/>
    <property type="project" value="UniProtKB-KW"/>
</dbReference>
<dbReference type="GO" id="GO:0051603">
    <property type="term" value="P:proteolysis involved in protein catabolic process"/>
    <property type="evidence" value="ECO:0007669"/>
    <property type="project" value="InterPro"/>
</dbReference>
<dbReference type="CDD" id="cd03762">
    <property type="entry name" value="proteasome_beta_type_6"/>
    <property type="match status" value="1"/>
</dbReference>
<dbReference type="FunFam" id="3.60.20.10:FF:000083">
    <property type="entry name" value="Proteasome subunit beta"/>
    <property type="match status" value="1"/>
</dbReference>
<dbReference type="Gene3D" id="3.60.20.10">
    <property type="entry name" value="Glutamine Phosphoribosylpyrophosphate, subunit 1, domain 1"/>
    <property type="match status" value="1"/>
</dbReference>
<dbReference type="InterPro" id="IPR029055">
    <property type="entry name" value="Ntn_hydrolases_N"/>
</dbReference>
<dbReference type="InterPro" id="IPR000243">
    <property type="entry name" value="Pept_T1A_subB"/>
</dbReference>
<dbReference type="InterPro" id="IPR016050">
    <property type="entry name" value="Proteasome_bsu_CS"/>
</dbReference>
<dbReference type="InterPro" id="IPR001353">
    <property type="entry name" value="Proteasome_sua/b"/>
</dbReference>
<dbReference type="InterPro" id="IPR023333">
    <property type="entry name" value="Proteasome_suB-type"/>
</dbReference>
<dbReference type="PANTHER" id="PTHR32194:SF0">
    <property type="entry name" value="ATP-DEPENDENT PROTEASE SUBUNIT HSLV"/>
    <property type="match status" value="1"/>
</dbReference>
<dbReference type="PANTHER" id="PTHR32194">
    <property type="entry name" value="METALLOPROTEASE TLDD"/>
    <property type="match status" value="1"/>
</dbReference>
<dbReference type="Pfam" id="PF00227">
    <property type="entry name" value="Proteasome"/>
    <property type="match status" value="1"/>
</dbReference>
<dbReference type="PRINTS" id="PR00141">
    <property type="entry name" value="PROTEASOME"/>
</dbReference>
<dbReference type="SUPFAM" id="SSF56235">
    <property type="entry name" value="N-terminal nucleophile aminohydrolases (Ntn hydrolases)"/>
    <property type="match status" value="1"/>
</dbReference>
<dbReference type="PROSITE" id="PS00854">
    <property type="entry name" value="PROTEASOME_BETA_1"/>
    <property type="match status" value="1"/>
</dbReference>
<dbReference type="PROSITE" id="PS51476">
    <property type="entry name" value="PROTEASOME_BETA_2"/>
    <property type="match status" value="1"/>
</dbReference>
<sequence>MMSNEKEMTGTTIIAIKYDDGVLIGADSRTSMGAYVSSRVTDKLTQITDKIFVCRSGSSADTQMISSYLRMYLSMYSQLEDSIPQVQRAAALASKIIYENPSLLAGLIVAGYDDKPRVFNISLGGSLTERDWAIGGSGSAFIYGYCDVNWRSGMSLEEGIRFVRNAVSCAINRDNASGGCIRMSAISRTGVQRYFYPGDKVLQ</sequence>
<evidence type="ECO:0000250" key="1"/>
<evidence type="ECO:0000255" key="2">
    <source>
        <dbReference type="PROSITE-ProRule" id="PRU00809"/>
    </source>
</evidence>
<evidence type="ECO:0000269" key="3">
    <source>
    </source>
</evidence>